<keyword id="KW-1185">Reference proteome</keyword>
<sequence length="70" mass="8240">MSDFNLRRYYTSNQLLKFSNEYPKSMTEIKKGELKGYDIFTSSTINMVVGNLLRDVQNRIDQADQIEKRS</sequence>
<feature type="chain" id="PRO_0000416641" description="Uncharacterized protein PJ695.02">
    <location>
        <begin position="1"/>
        <end position="70"/>
    </location>
</feature>
<organism>
    <name type="scientific">Schizosaccharomyces pombe (strain 972 / ATCC 24843)</name>
    <name type="common">Fission yeast</name>
    <dbReference type="NCBI Taxonomy" id="284812"/>
    <lineage>
        <taxon>Eukaryota</taxon>
        <taxon>Fungi</taxon>
        <taxon>Dikarya</taxon>
        <taxon>Ascomycota</taxon>
        <taxon>Taphrinomycotina</taxon>
        <taxon>Schizosaccharomycetes</taxon>
        <taxon>Schizosaccharomycetales</taxon>
        <taxon>Schizosaccharomycetaceae</taxon>
        <taxon>Schizosaccharomyces</taxon>
    </lineage>
</organism>
<reference key="1">
    <citation type="journal article" date="2002" name="Nature">
        <title>The genome sequence of Schizosaccharomyces pombe.</title>
        <authorList>
            <person name="Wood V."/>
            <person name="Gwilliam R."/>
            <person name="Rajandream M.A."/>
            <person name="Lyne M.H."/>
            <person name="Lyne R."/>
            <person name="Stewart A."/>
            <person name="Sgouros J.G."/>
            <person name="Peat N."/>
            <person name="Hayles J."/>
            <person name="Baker S.G."/>
            <person name="Basham D."/>
            <person name="Bowman S."/>
            <person name="Brooks K."/>
            <person name="Brown D."/>
            <person name="Brown S."/>
            <person name="Chillingworth T."/>
            <person name="Churcher C.M."/>
            <person name="Collins M."/>
            <person name="Connor R."/>
            <person name="Cronin A."/>
            <person name="Davis P."/>
            <person name="Feltwell T."/>
            <person name="Fraser A."/>
            <person name="Gentles S."/>
            <person name="Goble A."/>
            <person name="Hamlin N."/>
            <person name="Harris D.E."/>
            <person name="Hidalgo J."/>
            <person name="Hodgson G."/>
            <person name="Holroyd S."/>
            <person name="Hornsby T."/>
            <person name="Howarth S."/>
            <person name="Huckle E.J."/>
            <person name="Hunt S."/>
            <person name="Jagels K."/>
            <person name="James K.D."/>
            <person name="Jones L."/>
            <person name="Jones M."/>
            <person name="Leather S."/>
            <person name="McDonald S."/>
            <person name="McLean J."/>
            <person name="Mooney P."/>
            <person name="Moule S."/>
            <person name="Mungall K.L."/>
            <person name="Murphy L.D."/>
            <person name="Niblett D."/>
            <person name="Odell C."/>
            <person name="Oliver K."/>
            <person name="O'Neil S."/>
            <person name="Pearson D."/>
            <person name="Quail M.A."/>
            <person name="Rabbinowitsch E."/>
            <person name="Rutherford K.M."/>
            <person name="Rutter S."/>
            <person name="Saunders D."/>
            <person name="Seeger K."/>
            <person name="Sharp S."/>
            <person name="Skelton J."/>
            <person name="Simmonds M.N."/>
            <person name="Squares R."/>
            <person name="Squares S."/>
            <person name="Stevens K."/>
            <person name="Taylor K."/>
            <person name="Taylor R.G."/>
            <person name="Tivey A."/>
            <person name="Walsh S.V."/>
            <person name="Warren T."/>
            <person name="Whitehead S."/>
            <person name="Woodward J.R."/>
            <person name="Volckaert G."/>
            <person name="Aert R."/>
            <person name="Robben J."/>
            <person name="Grymonprez B."/>
            <person name="Weltjens I."/>
            <person name="Vanstreels E."/>
            <person name="Rieger M."/>
            <person name="Schaefer M."/>
            <person name="Mueller-Auer S."/>
            <person name="Gabel C."/>
            <person name="Fuchs M."/>
            <person name="Duesterhoeft A."/>
            <person name="Fritzc C."/>
            <person name="Holzer E."/>
            <person name="Moestl D."/>
            <person name="Hilbert H."/>
            <person name="Borzym K."/>
            <person name="Langer I."/>
            <person name="Beck A."/>
            <person name="Lehrach H."/>
            <person name="Reinhardt R."/>
            <person name="Pohl T.M."/>
            <person name="Eger P."/>
            <person name="Zimmermann W."/>
            <person name="Wedler H."/>
            <person name="Wambutt R."/>
            <person name="Purnelle B."/>
            <person name="Goffeau A."/>
            <person name="Cadieu E."/>
            <person name="Dreano S."/>
            <person name="Gloux S."/>
            <person name="Lelaure V."/>
            <person name="Mottier S."/>
            <person name="Galibert F."/>
            <person name="Aves S.J."/>
            <person name="Xiang Z."/>
            <person name="Hunt C."/>
            <person name="Moore K."/>
            <person name="Hurst S.M."/>
            <person name="Lucas M."/>
            <person name="Rochet M."/>
            <person name="Gaillardin C."/>
            <person name="Tallada V.A."/>
            <person name="Garzon A."/>
            <person name="Thode G."/>
            <person name="Daga R.R."/>
            <person name="Cruzado L."/>
            <person name="Jimenez J."/>
            <person name="Sanchez M."/>
            <person name="del Rey F."/>
            <person name="Benito J."/>
            <person name="Dominguez A."/>
            <person name="Revuelta J.L."/>
            <person name="Moreno S."/>
            <person name="Armstrong J."/>
            <person name="Forsburg S.L."/>
            <person name="Cerutti L."/>
            <person name="Lowe T."/>
            <person name="McCombie W.R."/>
            <person name="Paulsen I."/>
            <person name="Potashkin J."/>
            <person name="Shpakovski G.V."/>
            <person name="Ussery D."/>
            <person name="Barrell B.G."/>
            <person name="Nurse P."/>
        </authorList>
    </citation>
    <scope>NUCLEOTIDE SEQUENCE [LARGE SCALE GENOMIC DNA]</scope>
    <source>
        <strain>972 / ATCC 24843</strain>
    </source>
</reference>
<reference key="2">
    <citation type="journal article" date="2011" name="Science">
        <title>Comparative functional genomics of the fission yeasts.</title>
        <authorList>
            <person name="Rhind N."/>
            <person name="Chen Z."/>
            <person name="Yassour M."/>
            <person name="Thompson D.A."/>
            <person name="Haas B.J."/>
            <person name="Habib N."/>
            <person name="Wapinski I."/>
            <person name="Roy S."/>
            <person name="Lin M.F."/>
            <person name="Heiman D.I."/>
            <person name="Young S.K."/>
            <person name="Furuya K."/>
            <person name="Guo Y."/>
            <person name="Pidoux A."/>
            <person name="Chen H.M."/>
            <person name="Robbertse B."/>
            <person name="Goldberg J.M."/>
            <person name="Aoki K."/>
            <person name="Bayne E.H."/>
            <person name="Berlin A.M."/>
            <person name="Desjardins C.A."/>
            <person name="Dobbs E."/>
            <person name="Dukaj L."/>
            <person name="Fan L."/>
            <person name="FitzGerald M.G."/>
            <person name="French C."/>
            <person name="Gujja S."/>
            <person name="Hansen K."/>
            <person name="Keifenheim D."/>
            <person name="Levin J.Z."/>
            <person name="Mosher R.A."/>
            <person name="Mueller C.A."/>
            <person name="Pfiffner J."/>
            <person name="Priest M."/>
            <person name="Russ C."/>
            <person name="Smialowska A."/>
            <person name="Swoboda P."/>
            <person name="Sykes S.M."/>
            <person name="Vaughn M."/>
            <person name="Vengrova S."/>
            <person name="Yoder R."/>
            <person name="Zeng Q."/>
            <person name="Allshire R."/>
            <person name="Baulcombe D."/>
            <person name="Birren B.W."/>
            <person name="Brown W."/>
            <person name="Ekwall K."/>
            <person name="Kellis M."/>
            <person name="Leatherwood J."/>
            <person name="Levin H."/>
            <person name="Margalit H."/>
            <person name="Martienssen R."/>
            <person name="Nieduszynski C.A."/>
            <person name="Spatafora J.W."/>
            <person name="Friedman N."/>
            <person name="Dalgaard J.Z."/>
            <person name="Baumann P."/>
            <person name="Niki H."/>
            <person name="Regev A."/>
            <person name="Nusbaum C."/>
        </authorList>
    </citation>
    <scope>IDENTIFICATION</scope>
</reference>
<protein>
    <recommendedName>
        <fullName>Uncharacterized protein PJ695.02</fullName>
    </recommendedName>
</protein>
<gene>
    <name type="ORF">SPAPJ695.02</name>
</gene>
<accession>G2TRM2</accession>
<dbReference type="EMBL" id="CU329670">
    <property type="protein sequence ID" value="CCD31308.1"/>
    <property type="molecule type" value="Genomic_DNA"/>
</dbReference>
<dbReference type="RefSeq" id="XP_004001761.1">
    <property type="nucleotide sequence ID" value="XM_004001712.1"/>
</dbReference>
<dbReference type="PaxDb" id="4896-SPAPJ695.02.1"/>
<dbReference type="EnsemblFungi" id="SPAPJ695.02.1">
    <property type="protein sequence ID" value="SPAPJ695.02.1:pep"/>
    <property type="gene ID" value="SPAPJ695.02"/>
</dbReference>
<dbReference type="PomBase" id="SPAPJ695.02"/>
<dbReference type="VEuPathDB" id="FungiDB:SPAPJ695.02"/>
<dbReference type="HOGENOM" id="CLU_2759258_0_0_1"/>
<dbReference type="InParanoid" id="G2TRM2"/>
<dbReference type="PRO" id="PR:G2TRM2"/>
<dbReference type="Proteomes" id="UP000002485">
    <property type="component" value="Chromosome I"/>
</dbReference>
<proteinExistence type="predicted"/>
<name>YI82_SCHPO</name>